<feature type="signal peptide" evidence="2">
    <location>
        <begin position="1"/>
        <end position="18"/>
    </location>
</feature>
<feature type="chain" id="PRO_0000018154" description="Small cysteine-rich outer membrane protein OmcA">
    <location>
        <begin position="19"/>
        <end position="88"/>
    </location>
</feature>
<feature type="lipid moiety-binding region" description="N-palmitoyl cysteine" evidence="3">
    <location>
        <position position="19"/>
    </location>
</feature>
<feature type="lipid moiety-binding region" description="S-diacylglycerol cysteine" evidence="3">
    <location>
        <position position="19"/>
    </location>
</feature>
<reference key="1">
    <citation type="journal article" date="2000" name="Nucleic Acids Res.">
        <title>Genome sequences of Chlamydia trachomatis MoPn and Chlamydia pneumoniae AR39.</title>
        <authorList>
            <person name="Read T.D."/>
            <person name="Brunham R.C."/>
            <person name="Shen C."/>
            <person name="Gill S.R."/>
            <person name="Heidelberg J.F."/>
            <person name="White O."/>
            <person name="Hickey E.K."/>
            <person name="Peterson J.D."/>
            <person name="Utterback T.R."/>
            <person name="Berry K.J."/>
            <person name="Bass S."/>
            <person name="Linher K.D."/>
            <person name="Weidman J.F."/>
            <person name="Khouri H.M."/>
            <person name="Craven B."/>
            <person name="Bowman C."/>
            <person name="Dodson R.J."/>
            <person name="Gwinn M.L."/>
            <person name="Nelson W.C."/>
            <person name="DeBoy R.T."/>
            <person name="Kolonay J.F."/>
            <person name="McClarty G."/>
            <person name="Salzberg S.L."/>
            <person name="Eisen J.A."/>
            <person name="Fraser C.M."/>
        </authorList>
    </citation>
    <scope>NUCLEOTIDE SEQUENCE [LARGE SCALE GENOMIC DNA]</scope>
    <source>
        <strain>MoPn / Nigg</strain>
    </source>
</reference>
<name>OMCA_CHLMU</name>
<keyword id="KW-0998">Cell outer membrane</keyword>
<keyword id="KW-0133">Cell shape</keyword>
<keyword id="KW-1015">Disulfide bond</keyword>
<keyword id="KW-0449">Lipoprotein</keyword>
<keyword id="KW-0472">Membrane</keyword>
<keyword id="KW-0564">Palmitate</keyword>
<keyword id="KW-0732">Signal</keyword>
<gene>
    <name type="primary">omcA</name>
    <name type="ordered locus">TC_0728</name>
</gene>
<accession>Q9PJU9</accession>
<sequence length="88" mass="9342">MKKTALLAALCSVVSLSSCCRIVDCCFEDPCAPIKCSPCESKKREVNGGCNSCNGYVPSCKPCGGELDHETKQGPQARGIQADGRCRQ</sequence>
<proteinExistence type="evidence at transcript level"/>
<protein>
    <recommendedName>
        <fullName>Small cysteine-rich outer membrane protein OmcA</fullName>
        <shortName>Small-CRP</shortName>
    </recommendedName>
    <alternativeName>
        <fullName>9 kDa cysteine-rich lipoprotein</fullName>
        <shortName>9KD-CRP</shortName>
    </alternativeName>
</protein>
<organism>
    <name type="scientific">Chlamydia muridarum (strain MoPn / Nigg)</name>
    <dbReference type="NCBI Taxonomy" id="243161"/>
    <lineage>
        <taxon>Bacteria</taxon>
        <taxon>Pseudomonadati</taxon>
        <taxon>Chlamydiota</taxon>
        <taxon>Chlamydiia</taxon>
        <taxon>Chlamydiales</taxon>
        <taxon>Chlamydiaceae</taxon>
        <taxon>Chlamydia/Chlamydophila group</taxon>
        <taxon>Chlamydia</taxon>
    </lineage>
</organism>
<dbReference type="EMBL" id="AE002160">
    <property type="protein sequence ID" value="AAF39538.1"/>
    <property type="molecule type" value="Genomic_DNA"/>
</dbReference>
<dbReference type="PIR" id="D81671">
    <property type="entry name" value="D81671"/>
</dbReference>
<dbReference type="RefSeq" id="WP_010231362.1">
    <property type="nucleotide sequence ID" value="NZ_CP063055.1"/>
</dbReference>
<dbReference type="GeneID" id="1246091"/>
<dbReference type="KEGG" id="cmu:TC_0728"/>
<dbReference type="HOGENOM" id="CLU_2463467_0_0_0"/>
<dbReference type="OrthoDB" id="18978at2"/>
<dbReference type="Proteomes" id="UP000000800">
    <property type="component" value="Chromosome"/>
</dbReference>
<dbReference type="GO" id="GO:0009279">
    <property type="term" value="C:cell outer membrane"/>
    <property type="evidence" value="ECO:0007669"/>
    <property type="project" value="UniProtKB-SubCell"/>
</dbReference>
<dbReference type="GO" id="GO:0005201">
    <property type="term" value="F:extracellular matrix structural constituent"/>
    <property type="evidence" value="ECO:0007669"/>
    <property type="project" value="InterPro"/>
</dbReference>
<dbReference type="GO" id="GO:0008360">
    <property type="term" value="P:regulation of cell shape"/>
    <property type="evidence" value="ECO:0007669"/>
    <property type="project" value="UniProtKB-KW"/>
</dbReference>
<dbReference type="InterPro" id="IPR003517">
    <property type="entry name" value="Cys-rich_OMP3_Chlamydia"/>
</dbReference>
<dbReference type="Pfam" id="PF03503">
    <property type="entry name" value="Chlam_OMP3"/>
    <property type="match status" value="1"/>
</dbReference>
<dbReference type="PRINTS" id="PR01335">
    <property type="entry name" value="CHLAMIDIAOM3"/>
</dbReference>
<dbReference type="PROSITE" id="PS51257">
    <property type="entry name" value="PROKAR_LIPOPROTEIN"/>
    <property type="match status" value="1"/>
</dbReference>
<evidence type="ECO:0000250" key="1"/>
<evidence type="ECO:0000255" key="2">
    <source>
        <dbReference type="PROSITE-ProRule" id="PRU00303"/>
    </source>
</evidence>
<evidence type="ECO:0000305" key="3"/>
<comment type="function">
    <text evidence="1">In elementary bodies (EBs, the infectious stage, which is able to survive outside the host cell) provides the structural integrity of the outer envelope through disulfide cross-links with the large cysteine-rich periplasmic protein and the major outer membrane porin. It has been described in publications as the Sarkosyl-insoluble COMC (Chlamydia outer membrane complex), and serves as the functional equivalent of peptidoglycan (By similarity).</text>
</comment>
<comment type="subunit">
    <text evidence="1">Part of a disulfide cross-linked outer membrane complex (COMC) composed of the major outer membrane porin (MOMP), the small cysteine-rich protein (OmcA) and the large cysteine-rich periplasmic protein (OmcB).</text>
</comment>
<comment type="subcellular location">
    <subcellularLocation>
        <location evidence="3">Cell outer membrane</location>
        <topology evidence="2">Lipid-anchor</topology>
    </subcellularLocation>
    <text>The protein moiety probably penetrates into the periplasm.</text>
</comment>
<comment type="developmental stage">
    <text>It is present but the disulfide bonds are reduced in reticulate bodies (RBs).</text>
</comment>